<evidence type="ECO:0000250" key="1"/>
<evidence type="ECO:0000255" key="2"/>
<evidence type="ECO:0000256" key="3">
    <source>
        <dbReference type="SAM" id="MobiDB-lite"/>
    </source>
</evidence>
<evidence type="ECO:0000269" key="4">
    <source>
    </source>
</evidence>
<evidence type="ECO:0000305" key="5"/>
<protein>
    <recommendedName>
        <fullName>Heparan sulfate glucosamine 3-O-sulfotransferase 6</fullName>
        <ecNumber>2.8.2.23</ecNumber>
    </recommendedName>
    <alternativeName>
        <fullName>Heparan sulfate D-glucosaminyl 3-O-sulfotransferase 6</fullName>
        <shortName>3-OST-6</shortName>
        <shortName>Heparan sulfate 3-O-sulfotransferase 6</shortName>
    </alternativeName>
</protein>
<feature type="chain" id="PRO_0000085225" description="Heparan sulfate glucosamine 3-O-sulfotransferase 6">
    <location>
        <begin position="1"/>
        <end position="342"/>
    </location>
</feature>
<feature type="topological domain" description="Cytoplasmic" evidence="2">
    <location>
        <begin position="1"/>
        <end position="31"/>
    </location>
</feature>
<feature type="transmembrane region" description="Helical; Signal-anchor for type II membrane protein" evidence="2">
    <location>
        <begin position="32"/>
        <end position="49"/>
    </location>
</feature>
<feature type="topological domain" description="Lumenal" evidence="2">
    <location>
        <begin position="50"/>
        <end position="342"/>
    </location>
</feature>
<feature type="region of interest" description="Disordered" evidence="3">
    <location>
        <begin position="56"/>
        <end position="75"/>
    </location>
</feature>
<feature type="binding site" evidence="1">
    <location>
        <begin position="100"/>
        <end position="104"/>
    </location>
    <ligand>
        <name>3'-phosphoadenylyl sulfate</name>
        <dbReference type="ChEBI" id="CHEBI:58339"/>
    </ligand>
</feature>
<feature type="binding site" evidence="1">
    <location>
        <begin position="122"/>
        <end position="128"/>
    </location>
    <ligand>
        <name>substrate</name>
    </ligand>
</feature>
<feature type="binding site" evidence="1">
    <location>
        <begin position="153"/>
        <end position="156"/>
    </location>
    <ligand>
        <name>substrate</name>
    </ligand>
</feature>
<feature type="binding site" evidence="1">
    <location>
        <position position="181"/>
    </location>
    <ligand>
        <name>3'-phosphoadenylyl sulfate</name>
        <dbReference type="ChEBI" id="CHEBI:58339"/>
    </ligand>
</feature>
<feature type="binding site" evidence="1">
    <location>
        <position position="189"/>
    </location>
    <ligand>
        <name>3'-phosphoadenylyl sulfate</name>
        <dbReference type="ChEBI" id="CHEBI:58339"/>
    </ligand>
</feature>
<feature type="binding site" evidence="1">
    <location>
        <begin position="220"/>
        <end position="221"/>
    </location>
    <ligand>
        <name>substrate</name>
    </ligand>
</feature>
<feature type="binding site" evidence="1">
    <location>
        <begin position="305"/>
        <end position="309"/>
    </location>
    <ligand>
        <name>3'-phosphoadenylyl sulfate</name>
        <dbReference type="ChEBI" id="CHEBI:58339"/>
    </ligand>
</feature>
<feature type="glycosylation site" description="N-linked (GlcNAc...) asparagine" evidence="2">
    <location>
        <position position="281"/>
    </location>
</feature>
<feature type="disulfide bond" evidence="1">
    <location>
        <begin position="288"/>
        <end position="300"/>
    </location>
</feature>
<dbReference type="EC" id="2.8.2.23"/>
<dbReference type="EMBL" id="AY574375">
    <property type="protein sequence ID" value="AAT84072.1"/>
    <property type="molecule type" value="mRNA"/>
</dbReference>
<dbReference type="CCDS" id="CCDS28496.1"/>
<dbReference type="RefSeq" id="NP_001012402.1">
    <property type="nucleotide sequence ID" value="NM_001012402.2"/>
</dbReference>
<dbReference type="SMR" id="Q5GFD5"/>
<dbReference type="FunCoup" id="Q5GFD5">
    <property type="interactions" value="7"/>
</dbReference>
<dbReference type="STRING" id="10090.ENSMUSP00000040919"/>
<dbReference type="GlyCosmos" id="Q5GFD5">
    <property type="glycosylation" value="1 site, No reported glycans"/>
</dbReference>
<dbReference type="GlyGen" id="Q5GFD5">
    <property type="glycosylation" value="1 site"/>
</dbReference>
<dbReference type="iPTMnet" id="Q5GFD5"/>
<dbReference type="PhosphoSitePlus" id="Q5GFD5"/>
<dbReference type="PaxDb" id="10090-ENSMUSP00000040919"/>
<dbReference type="ProteomicsDB" id="267164"/>
<dbReference type="Antibodypedia" id="23316">
    <property type="antibodies" value="25 antibodies from 14 providers"/>
</dbReference>
<dbReference type="DNASU" id="328779"/>
<dbReference type="Ensembl" id="ENSMUST00000044922.8">
    <property type="protein sequence ID" value="ENSMUSP00000040919.7"/>
    <property type="gene ID" value="ENSMUSG00000039628.10"/>
</dbReference>
<dbReference type="GeneID" id="328779"/>
<dbReference type="KEGG" id="mmu:328779"/>
<dbReference type="UCSC" id="uc008ayj.1">
    <property type="organism name" value="mouse"/>
</dbReference>
<dbReference type="AGR" id="MGI:3580487"/>
<dbReference type="CTD" id="64711"/>
<dbReference type="MGI" id="MGI:3580487">
    <property type="gene designation" value="Hs3st6"/>
</dbReference>
<dbReference type="VEuPathDB" id="HostDB:ENSMUSG00000039628"/>
<dbReference type="eggNOG" id="KOG3704">
    <property type="taxonomic scope" value="Eukaryota"/>
</dbReference>
<dbReference type="GeneTree" id="ENSGT00940000154768"/>
<dbReference type="HOGENOM" id="CLU_017703_0_0_1"/>
<dbReference type="InParanoid" id="Q5GFD5"/>
<dbReference type="OMA" id="AQHLDHW"/>
<dbReference type="OrthoDB" id="411451at2759"/>
<dbReference type="PhylomeDB" id="Q5GFD5"/>
<dbReference type="TreeFam" id="TF350755"/>
<dbReference type="Reactome" id="R-MMU-2022928">
    <property type="pathway name" value="HS-GAG biosynthesis"/>
</dbReference>
<dbReference type="BioGRID-ORCS" id="328779">
    <property type="hits" value="7 hits in 75 CRISPR screens"/>
</dbReference>
<dbReference type="PRO" id="PR:Q5GFD5"/>
<dbReference type="Proteomes" id="UP000000589">
    <property type="component" value="Chromosome 17"/>
</dbReference>
<dbReference type="RNAct" id="Q5GFD5">
    <property type="molecule type" value="protein"/>
</dbReference>
<dbReference type="Bgee" id="ENSMUSG00000039628">
    <property type="expression patterns" value="Expressed in renal corpuscle and 72 other cell types or tissues"/>
</dbReference>
<dbReference type="ExpressionAtlas" id="Q5GFD5">
    <property type="expression patterns" value="baseline and differential"/>
</dbReference>
<dbReference type="GO" id="GO:0000139">
    <property type="term" value="C:Golgi membrane"/>
    <property type="evidence" value="ECO:0007669"/>
    <property type="project" value="UniProtKB-SubCell"/>
</dbReference>
<dbReference type="GO" id="GO:0008467">
    <property type="term" value="F:[heparan sulfate]-glucosamine 3-sulfotransferase activity"/>
    <property type="evidence" value="ECO:0000314"/>
    <property type="project" value="MGI"/>
</dbReference>
<dbReference type="GO" id="GO:0001835">
    <property type="term" value="P:blastocyst hatching"/>
    <property type="evidence" value="ECO:0000315"/>
    <property type="project" value="MGI"/>
</dbReference>
<dbReference type="GO" id="GO:0015012">
    <property type="term" value="P:heparan sulfate proteoglycan biosynthetic process"/>
    <property type="evidence" value="ECO:0000314"/>
    <property type="project" value="MGI"/>
</dbReference>
<dbReference type="FunFam" id="3.40.50.300:FF:000194">
    <property type="entry name" value="Sulfotransferase"/>
    <property type="match status" value="1"/>
</dbReference>
<dbReference type="Gene3D" id="3.40.50.300">
    <property type="entry name" value="P-loop containing nucleotide triphosphate hydrolases"/>
    <property type="match status" value="1"/>
</dbReference>
<dbReference type="InterPro" id="IPR037359">
    <property type="entry name" value="NST/OST"/>
</dbReference>
<dbReference type="InterPro" id="IPR027417">
    <property type="entry name" value="P-loop_NTPase"/>
</dbReference>
<dbReference type="InterPro" id="IPR000863">
    <property type="entry name" value="Sulfotransferase_dom"/>
</dbReference>
<dbReference type="PANTHER" id="PTHR10605:SF62">
    <property type="entry name" value="HEPARAN SULFATE GLUCOSAMINE 3-O-SULFOTRANSFERASE 6"/>
    <property type="match status" value="1"/>
</dbReference>
<dbReference type="PANTHER" id="PTHR10605">
    <property type="entry name" value="HEPARAN SULFATE SULFOTRANSFERASE"/>
    <property type="match status" value="1"/>
</dbReference>
<dbReference type="Pfam" id="PF00685">
    <property type="entry name" value="Sulfotransfer_1"/>
    <property type="match status" value="1"/>
</dbReference>
<dbReference type="SUPFAM" id="SSF52540">
    <property type="entry name" value="P-loop containing nucleoside triphosphate hydrolases"/>
    <property type="match status" value="1"/>
</dbReference>
<organism>
    <name type="scientific">Mus musculus</name>
    <name type="common">Mouse</name>
    <dbReference type="NCBI Taxonomy" id="10090"/>
    <lineage>
        <taxon>Eukaryota</taxon>
        <taxon>Metazoa</taxon>
        <taxon>Chordata</taxon>
        <taxon>Craniata</taxon>
        <taxon>Vertebrata</taxon>
        <taxon>Euteleostomi</taxon>
        <taxon>Mammalia</taxon>
        <taxon>Eutheria</taxon>
        <taxon>Euarchontoglires</taxon>
        <taxon>Glires</taxon>
        <taxon>Rodentia</taxon>
        <taxon>Myomorpha</taxon>
        <taxon>Muroidea</taxon>
        <taxon>Muridae</taxon>
        <taxon>Murinae</taxon>
        <taxon>Mus</taxon>
        <taxon>Mus</taxon>
    </lineage>
</organism>
<sequence>MAGSGGLGGGAGDLQGAGTGQGTALRALRAPLALVVLLLSAYCLFALPGRCPPAARAPAPVPAPAEPPHTSLRLRAPGLPVASGPGRRRFPQALIVGVKKGGTRALLEFLRLHPDVRALGSEPHFFDRCYDRGLAWYRGLMPRTLDGQITMEKTPSYFVTQEAPRRIHGMSPDTKLIVVVRNPVTRAISDYAQTLSKTPGLPSFRALAFRHGLGPVDTAWSAVRIGLYAQHLDNWLRYFPLSHFLFVSGERLVSDPAGEVGRVQDFLGLKRVVTDKHFYFNATKGFPCLKKAQGSGRPRCLGKSKGRPHPRVPEAVVQRLQAFYRPFNRKFYQMTGQDFGWD</sequence>
<reference key="1">
    <citation type="journal article" date="2005" name="Biochem. J.">
        <title>Characterization of heparan sulphate 3-O-sulphotransferase isoform 6 and its role in assisting the entry of herpes simplex virus type 1.</title>
        <authorList>
            <person name="Xu D."/>
            <person name="Tiwari V."/>
            <person name="Xia G."/>
            <person name="Clement C."/>
            <person name="Shukla D."/>
            <person name="Liu J."/>
        </authorList>
    </citation>
    <scope>NUCLEOTIDE SEQUENCE [MRNA]</scope>
    <scope>TISSUE SPECIFICITY</scope>
</reference>
<keyword id="KW-1015">Disulfide bond</keyword>
<keyword id="KW-0325">Glycoprotein</keyword>
<keyword id="KW-0333">Golgi apparatus</keyword>
<keyword id="KW-0472">Membrane</keyword>
<keyword id="KW-1185">Reference proteome</keyword>
<keyword id="KW-0735">Signal-anchor</keyword>
<keyword id="KW-0808">Transferase</keyword>
<keyword id="KW-0812">Transmembrane</keyword>
<keyword id="KW-1133">Transmembrane helix</keyword>
<proteinExistence type="evidence at transcript level"/>
<comment type="function">
    <text>Sulfotransferase that utilizes 3'-phospho-5'-adenylyl sulfate (PAPS) to catalyze the transfer of a sulfo group to heparan sulfate. Unlike 3-OST-1, does not convert non-anticoagulant heparan sulfate to anticoagulant heparan sulfate.</text>
</comment>
<comment type="catalytic activity">
    <reaction>
        <text>alpha-D-glucosaminyl-[heparan sulfate](n) + 3'-phosphoadenylyl sulfate = 3-sulfo-alpha-D-glucosaminyl-[heparan sulfate](n) + adenosine 3',5'-bisphosphate + H(+)</text>
        <dbReference type="Rhea" id="RHEA:15461"/>
        <dbReference type="Rhea" id="RHEA-COMP:9830"/>
        <dbReference type="Rhea" id="RHEA-COMP:9831"/>
        <dbReference type="ChEBI" id="CHEBI:15378"/>
        <dbReference type="ChEBI" id="CHEBI:58339"/>
        <dbReference type="ChEBI" id="CHEBI:58343"/>
        <dbReference type="ChEBI" id="CHEBI:58388"/>
        <dbReference type="ChEBI" id="CHEBI:70975"/>
        <dbReference type="EC" id="2.8.2.23"/>
    </reaction>
</comment>
<comment type="subcellular location">
    <subcellularLocation>
        <location evidence="5">Golgi apparatus membrane</location>
        <topology evidence="5">Single-pass type II membrane protein</topology>
    </subcellularLocation>
</comment>
<comment type="tissue specificity">
    <text evidence="4">Expressed in liver and kidney, followed by heart, brain, lung and testis.</text>
</comment>
<comment type="similarity">
    <text evidence="5">Belongs to the sulfotransferase 1 family.</text>
</comment>
<gene>
    <name type="primary">Hs3st6</name>
</gene>
<accession>Q5GFD5</accession>
<name>HS3S6_MOUSE</name>